<protein>
    <recommendedName>
        <fullName evidence="1">Large ribosomal subunit protein bL28</fullName>
    </recommendedName>
    <alternativeName>
        <fullName evidence="2">50S ribosomal protein L28</fullName>
    </alternativeName>
</protein>
<dbReference type="EMBL" id="CP000360">
    <property type="protein sequence ID" value="ABF39170.1"/>
    <property type="molecule type" value="Genomic_DNA"/>
</dbReference>
<dbReference type="RefSeq" id="WP_011520972.1">
    <property type="nucleotide sequence ID" value="NC_008009.1"/>
</dbReference>
<dbReference type="SMR" id="Q1IVD0"/>
<dbReference type="STRING" id="204669.Acid345_0165"/>
<dbReference type="EnsemblBacteria" id="ABF39170">
    <property type="protein sequence ID" value="ABF39170"/>
    <property type="gene ID" value="Acid345_0165"/>
</dbReference>
<dbReference type="KEGG" id="aba:Acid345_0165"/>
<dbReference type="eggNOG" id="COG0227">
    <property type="taxonomic scope" value="Bacteria"/>
</dbReference>
<dbReference type="HOGENOM" id="CLU_064548_7_0_0"/>
<dbReference type="OrthoDB" id="9805609at2"/>
<dbReference type="Proteomes" id="UP000002432">
    <property type="component" value="Chromosome"/>
</dbReference>
<dbReference type="GO" id="GO:1990904">
    <property type="term" value="C:ribonucleoprotein complex"/>
    <property type="evidence" value="ECO:0007669"/>
    <property type="project" value="UniProtKB-KW"/>
</dbReference>
<dbReference type="GO" id="GO:0005840">
    <property type="term" value="C:ribosome"/>
    <property type="evidence" value="ECO:0007669"/>
    <property type="project" value="UniProtKB-KW"/>
</dbReference>
<dbReference type="GO" id="GO:0003735">
    <property type="term" value="F:structural constituent of ribosome"/>
    <property type="evidence" value="ECO:0007669"/>
    <property type="project" value="InterPro"/>
</dbReference>
<dbReference type="GO" id="GO:0006412">
    <property type="term" value="P:translation"/>
    <property type="evidence" value="ECO:0007669"/>
    <property type="project" value="UniProtKB-UniRule"/>
</dbReference>
<dbReference type="Gene3D" id="2.30.170.40">
    <property type="entry name" value="Ribosomal protein L28/L24"/>
    <property type="match status" value="1"/>
</dbReference>
<dbReference type="HAMAP" id="MF_00373">
    <property type="entry name" value="Ribosomal_bL28"/>
    <property type="match status" value="1"/>
</dbReference>
<dbReference type="InterPro" id="IPR050096">
    <property type="entry name" value="Bacterial_rp_bL28"/>
</dbReference>
<dbReference type="InterPro" id="IPR026569">
    <property type="entry name" value="Ribosomal_bL28"/>
</dbReference>
<dbReference type="InterPro" id="IPR034704">
    <property type="entry name" value="Ribosomal_bL28/bL31-like_sf"/>
</dbReference>
<dbReference type="InterPro" id="IPR001383">
    <property type="entry name" value="Ribosomal_bL28_bact-type"/>
</dbReference>
<dbReference type="InterPro" id="IPR037147">
    <property type="entry name" value="Ribosomal_bL28_sf"/>
</dbReference>
<dbReference type="NCBIfam" id="TIGR00009">
    <property type="entry name" value="L28"/>
    <property type="match status" value="1"/>
</dbReference>
<dbReference type="PANTHER" id="PTHR39080">
    <property type="entry name" value="50S RIBOSOMAL PROTEIN L28"/>
    <property type="match status" value="1"/>
</dbReference>
<dbReference type="PANTHER" id="PTHR39080:SF1">
    <property type="entry name" value="LARGE RIBOSOMAL SUBUNIT PROTEIN BL28A"/>
    <property type="match status" value="1"/>
</dbReference>
<dbReference type="Pfam" id="PF00830">
    <property type="entry name" value="Ribosomal_L28"/>
    <property type="match status" value="1"/>
</dbReference>
<dbReference type="SUPFAM" id="SSF143800">
    <property type="entry name" value="L28p-like"/>
    <property type="match status" value="1"/>
</dbReference>
<accession>Q1IVD0</accession>
<keyword id="KW-1185">Reference proteome</keyword>
<keyword id="KW-0687">Ribonucleoprotein</keyword>
<keyword id="KW-0689">Ribosomal protein</keyword>
<feature type="chain" id="PRO_1000007153" description="Large ribosomal subunit protein bL28">
    <location>
        <begin position="1"/>
        <end position="62"/>
    </location>
</feature>
<organism>
    <name type="scientific">Koribacter versatilis (strain Ellin345)</name>
    <dbReference type="NCBI Taxonomy" id="204669"/>
    <lineage>
        <taxon>Bacteria</taxon>
        <taxon>Pseudomonadati</taxon>
        <taxon>Acidobacteriota</taxon>
        <taxon>Terriglobia</taxon>
        <taxon>Terriglobales</taxon>
        <taxon>Candidatus Korobacteraceae</taxon>
        <taxon>Candidatus Korobacter</taxon>
    </lineage>
</organism>
<comment type="similarity">
    <text evidence="1">Belongs to the bacterial ribosomal protein bL28 family.</text>
</comment>
<name>RL28_KORVE</name>
<reference key="1">
    <citation type="journal article" date="2009" name="Appl. Environ. Microbiol.">
        <title>Three genomes from the phylum Acidobacteria provide insight into the lifestyles of these microorganisms in soils.</title>
        <authorList>
            <person name="Ward N.L."/>
            <person name="Challacombe J.F."/>
            <person name="Janssen P.H."/>
            <person name="Henrissat B."/>
            <person name="Coutinho P.M."/>
            <person name="Wu M."/>
            <person name="Xie G."/>
            <person name="Haft D.H."/>
            <person name="Sait M."/>
            <person name="Badger J."/>
            <person name="Barabote R.D."/>
            <person name="Bradley B."/>
            <person name="Brettin T.S."/>
            <person name="Brinkac L.M."/>
            <person name="Bruce D."/>
            <person name="Creasy T."/>
            <person name="Daugherty S.C."/>
            <person name="Davidsen T.M."/>
            <person name="DeBoy R.T."/>
            <person name="Detter J.C."/>
            <person name="Dodson R.J."/>
            <person name="Durkin A.S."/>
            <person name="Ganapathy A."/>
            <person name="Gwinn-Giglio M."/>
            <person name="Han C.S."/>
            <person name="Khouri H."/>
            <person name="Kiss H."/>
            <person name="Kothari S.P."/>
            <person name="Madupu R."/>
            <person name="Nelson K.E."/>
            <person name="Nelson W.C."/>
            <person name="Paulsen I."/>
            <person name="Penn K."/>
            <person name="Ren Q."/>
            <person name="Rosovitz M.J."/>
            <person name="Selengut J.D."/>
            <person name="Shrivastava S."/>
            <person name="Sullivan S.A."/>
            <person name="Tapia R."/>
            <person name="Thompson L.S."/>
            <person name="Watkins K.L."/>
            <person name="Yang Q."/>
            <person name="Yu C."/>
            <person name="Zafar N."/>
            <person name="Zhou L."/>
            <person name="Kuske C.R."/>
        </authorList>
    </citation>
    <scope>NUCLEOTIDE SEQUENCE [LARGE SCALE GENOMIC DNA]</scope>
    <source>
        <strain>Ellin345</strain>
    </source>
</reference>
<proteinExistence type="inferred from homology"/>
<sequence length="62" mass="6910">MAQVCDMCGKGPQFGNNISHAHNVTKRRWNVNLRPVRAKVNGATKRMRVCTTCLRSGKLVKA</sequence>
<evidence type="ECO:0000255" key="1">
    <source>
        <dbReference type="HAMAP-Rule" id="MF_00373"/>
    </source>
</evidence>
<evidence type="ECO:0000305" key="2"/>
<gene>
    <name evidence="1" type="primary">rpmB</name>
    <name type="ordered locus">Acid345_0165</name>
</gene>